<sequence>MDDLDALLADLESTTSHISKRPVFLTEETPYSYPTGNHTYQEIAVPPPVPPPPSSEALNGTVIDPLDQWQPSVSRYGHQQPQSQSPIYSSSAKSSSASVPRDGLSSPSPRASEEEHVYSFPNKQKSAEPSPTMTSTSLGSNLSELDRLLLELNAVQHNPPSGFSADEVSRSPSLPNVTGPHYVIPESSSSAGGKAAPPTKEKPKRNGGRGIEDVRPSVESLLDELESSVPSPVPAITVSQGEVSSPQRVNASQQQTRISASSATRELDELMASLSDFKFMAQGKAGGSSSPPSTTPKPGSQLDTMLGSLQSDLNKLGVATVAKGVCGACKKPIAGQVVTAMGKTWHPEHFVCTHCQEEIGSRNFFERDGQPYCEKDYHNLFSPRCYYCNGPILDKVVTALDRTWHPEHFFCAQCGVFFGPEGFHEKDGKAYCRKDYFDMFAPKCGGCARAILENYISALNTLWHPECFVCRECFTPFINGSFFEHDGQPYCEVHYHERRGSLCSGCQKPITGRCITAMGKKFHPEHFVCAFCLKQLNKGTFKEQNDKPYCQNCFLKLFC</sequence>
<name>PAXI_CHICK</name>
<keyword id="KW-0002">3D-structure</keyword>
<keyword id="KW-0130">Cell adhesion</keyword>
<keyword id="KW-0965">Cell junction</keyword>
<keyword id="KW-0963">Cytoplasm</keyword>
<keyword id="KW-0206">Cytoskeleton</keyword>
<keyword id="KW-0440">LIM domain</keyword>
<keyword id="KW-0479">Metal-binding</keyword>
<keyword id="KW-0597">Phosphoprotein</keyword>
<keyword id="KW-1185">Reference proteome</keyword>
<keyword id="KW-0677">Repeat</keyword>
<keyword id="KW-0862">Zinc</keyword>
<comment type="function">
    <text>Cytoskeletal protein involved in actin-membrane attachment at sites of cell adhesion to the extracellular matrix (focal adhesion). Binds in vitro to vinculin as well as to the SH3 domain of c-SRC and, when tyrosine phosphorylated, to the SH2 domain of v-CRK.</text>
</comment>
<comment type="subunit">
    <text evidence="5">Interacts (via LD motif 4) with PARVA/PARVIN and ILK.</text>
</comment>
<comment type="interaction">
    <interactant intactId="EBI-2896280">
        <id>P49024</id>
    </interactant>
    <interactant intactId="EBI-2896409">
        <id>Q00944</id>
        <label>PTK2</label>
    </interactant>
    <organismsDiffer>false</organismsDiffer>
    <experiments>2</experiments>
</comment>
<comment type="interaction">
    <interactant intactId="EBI-2896280">
        <id>P49024</id>
    </interactant>
    <interactant intactId="EBI-1039563">
        <id>P12003</id>
        <label>VCL</label>
    </interactant>
    <organismsDiffer>false</organismsDiffer>
    <experiments>5</experiments>
</comment>
<comment type="interaction">
    <interactant intactId="EBI-2896280">
        <id>P49024</id>
    </interactant>
    <interactant intactId="EBI-6138078">
        <id>P12003-1</id>
        <label>VCL</label>
    </interactant>
    <organismsDiffer>false</organismsDiffer>
    <experiments>2</experiments>
</comment>
<comment type="interaction">
    <interactant intactId="EBI-2896280">
        <id>P49024</id>
    </interactant>
    <interactant intactId="EBI-6138096">
        <id>P12003-2</id>
        <label>VCL</label>
    </interactant>
    <organismsDiffer>false</organismsDiffer>
    <experiments>2</experiments>
</comment>
<comment type="interaction">
    <interactant intactId="EBI-2896280">
        <id>P49024</id>
    </interactant>
    <interactant intactId="EBI-1177242">
        <id>P03126</id>
        <label>E6</label>
    </interactant>
    <organismsDiffer>true</organismsDiffer>
    <experiments>2</experiments>
</comment>
<comment type="interaction">
    <interactant intactId="EBI-2896280">
        <id>P49024</id>
    </interactant>
    <interactant intactId="EBI-7281937">
        <id>P06931</id>
        <label>E6</label>
    </interactant>
    <organismsDiffer>true</organismsDiffer>
    <experiments>5</experiments>
</comment>
<comment type="interaction">
    <interactant intactId="EBI-2896280">
        <id>P49024</id>
    </interactant>
    <interactant intactId="EBI-466061">
        <id>Q9Y2X7</id>
        <label>GIT1</label>
    </interactant>
    <organismsDiffer>true</organismsDiffer>
    <experiments>3</experiments>
</comment>
<comment type="interaction">
    <interactant intactId="EBI-2896280">
        <id>P49024</id>
    </interactant>
    <interactant intactId="EBI-432047">
        <id>Q64727</id>
        <label>Vcl</label>
    </interactant>
    <organismsDiffer>true</organismsDiffer>
    <experiments>4</experiments>
</comment>
<comment type="subcellular location">
    <subcellularLocation>
        <location evidence="6">Cytoplasm</location>
        <location evidence="6">Cytoskeleton</location>
    </subcellularLocation>
    <subcellularLocation>
        <location evidence="6">Cell junction</location>
        <location evidence="6">Focal adhesion</location>
    </subcellularLocation>
    <subcellularLocation>
        <location evidence="2">Cytoplasm</location>
        <location evidence="2">Cell cortex</location>
    </subcellularLocation>
</comment>
<comment type="PTM">
    <text evidence="7">Phosphorylated on tyrosine residues during integrin-mediated cell adhesion, embryonic development, fibroblast transformation and following stimulation of cells by mitogens.</text>
</comment>
<feature type="chain" id="PRO_0000075857" description="Paxillin">
    <location>
        <begin position="1"/>
        <end position="559"/>
    </location>
</feature>
<feature type="domain" description="LIM zinc-binding 1" evidence="3">
    <location>
        <begin position="326"/>
        <end position="376"/>
    </location>
</feature>
<feature type="domain" description="LIM zinc-binding 2" evidence="3">
    <location>
        <begin position="385"/>
        <end position="435"/>
    </location>
</feature>
<feature type="domain" description="LIM zinc-binding 3" evidence="3">
    <location>
        <begin position="444"/>
        <end position="494"/>
    </location>
</feature>
<feature type="domain" description="LIM zinc-binding 4" evidence="3">
    <location>
        <begin position="503"/>
        <end position="553"/>
    </location>
</feature>
<feature type="region of interest" description="Disordered" evidence="4">
    <location>
        <begin position="17"/>
        <end position="139"/>
    </location>
</feature>
<feature type="region of interest" description="Disordered" evidence="4">
    <location>
        <begin position="158"/>
        <end position="213"/>
    </location>
</feature>
<feature type="region of interest" description="Disordered" evidence="4">
    <location>
        <begin position="225"/>
        <end position="262"/>
    </location>
</feature>
<feature type="region of interest" description="Required for binding to PARVA and ILK" evidence="5">
    <location>
        <begin position="263"/>
        <end position="282"/>
    </location>
</feature>
<feature type="region of interest" description="Disordered" evidence="4">
    <location>
        <begin position="281"/>
        <end position="301"/>
    </location>
</feature>
<feature type="short sequence motif" description="LD motif 1" evidence="2">
    <location>
        <begin position="3"/>
        <end position="15"/>
    </location>
</feature>
<feature type="short sequence motif" description="LD motif 2" evidence="2">
    <location>
        <begin position="144"/>
        <end position="156"/>
    </location>
</feature>
<feature type="short sequence motif" description="LD motif 3" evidence="2">
    <location>
        <begin position="217"/>
        <end position="229"/>
    </location>
</feature>
<feature type="short sequence motif" description="LD motif 4" evidence="2">
    <location>
        <begin position="266"/>
        <end position="277"/>
    </location>
</feature>
<feature type="short sequence motif" description="LD motif 5" evidence="2">
    <location>
        <begin position="301"/>
        <end position="313"/>
    </location>
</feature>
<feature type="compositionally biased region" description="Pro residues" evidence="4">
    <location>
        <begin position="45"/>
        <end position="54"/>
    </location>
</feature>
<feature type="compositionally biased region" description="Low complexity" evidence="4">
    <location>
        <begin position="79"/>
        <end position="98"/>
    </location>
</feature>
<feature type="compositionally biased region" description="Polar residues" evidence="4">
    <location>
        <begin position="121"/>
        <end position="137"/>
    </location>
</feature>
<feature type="compositionally biased region" description="Polar residues" evidence="4">
    <location>
        <begin position="237"/>
        <end position="262"/>
    </location>
</feature>
<feature type="modified residue" description="Phosphotyrosine" evidence="1">
    <location>
        <position position="31"/>
    </location>
</feature>
<feature type="modified residue" description="Phosphotyrosine; by FAK1" evidence="7">
    <location>
        <position position="118"/>
    </location>
</feature>
<feature type="helix" evidence="8">
    <location>
        <begin position="142"/>
        <end position="157"/>
    </location>
</feature>
<feature type="helix" evidence="9">
    <location>
        <begin position="263"/>
        <end position="275"/>
    </location>
</feature>
<accession>P49024</accession>
<evidence type="ECO:0000250" key="1"/>
<evidence type="ECO:0000250" key="2">
    <source>
        <dbReference type="UniProtKB" id="Q8VI36"/>
    </source>
</evidence>
<evidence type="ECO:0000255" key="3">
    <source>
        <dbReference type="PROSITE-ProRule" id="PRU00125"/>
    </source>
</evidence>
<evidence type="ECO:0000256" key="4">
    <source>
        <dbReference type="SAM" id="MobiDB-lite"/>
    </source>
</evidence>
<evidence type="ECO:0000269" key="5">
    <source>
    </source>
</evidence>
<evidence type="ECO:0000269" key="6">
    <source>
    </source>
</evidence>
<evidence type="ECO:0000269" key="7">
    <source>
    </source>
</evidence>
<evidence type="ECO:0007829" key="8">
    <source>
        <dbReference type="PDB" id="2L6F"/>
    </source>
</evidence>
<evidence type="ECO:0007829" key="9">
    <source>
        <dbReference type="PDB" id="2L6H"/>
    </source>
</evidence>
<gene>
    <name type="primary">PXN</name>
</gene>
<dbReference type="EMBL" id="U14589">
    <property type="protein sequence ID" value="AAC59665.1"/>
    <property type="molecule type" value="mRNA"/>
</dbReference>
<dbReference type="EMBL" id="L30099">
    <property type="protein sequence ID" value="AAC38018.1"/>
    <property type="molecule type" value="mRNA"/>
</dbReference>
<dbReference type="PIR" id="B55933">
    <property type="entry name" value="B55933"/>
</dbReference>
<dbReference type="RefSeq" id="NP_990315.1">
    <property type="nucleotide sequence ID" value="NM_204984.1"/>
</dbReference>
<dbReference type="PDB" id="2L6F">
    <property type="method" value="NMR"/>
    <property type="chains" value="A=140-161, A=262-275"/>
</dbReference>
<dbReference type="PDB" id="2L6G">
    <property type="method" value="NMR"/>
    <property type="chains" value="A=140-161"/>
</dbReference>
<dbReference type="PDB" id="2L6H">
    <property type="method" value="NMR"/>
    <property type="chains" value="A=263-276"/>
</dbReference>
<dbReference type="PDB" id="4R32">
    <property type="method" value="X-ray"/>
    <property type="resolution" value="3.50 A"/>
    <property type="chains" value="B/C=139-162"/>
</dbReference>
<dbReference type="PDBsum" id="2L6F"/>
<dbReference type="PDBsum" id="2L6G"/>
<dbReference type="PDBsum" id="2L6H"/>
<dbReference type="PDBsum" id="4R32"/>
<dbReference type="SMR" id="P49024"/>
<dbReference type="BioGRID" id="676106">
    <property type="interactions" value="4"/>
</dbReference>
<dbReference type="ELM" id="P49024"/>
<dbReference type="FunCoup" id="P49024">
    <property type="interactions" value="472"/>
</dbReference>
<dbReference type="IntAct" id="P49024">
    <property type="interactions" value="13"/>
</dbReference>
<dbReference type="MINT" id="P49024"/>
<dbReference type="iPTMnet" id="P49024"/>
<dbReference type="PaxDb" id="9031-ENSGALP00000011713"/>
<dbReference type="GeneID" id="395832"/>
<dbReference type="KEGG" id="gga:395832"/>
<dbReference type="CTD" id="5829"/>
<dbReference type="VEuPathDB" id="HostDB:geneid_395832"/>
<dbReference type="eggNOG" id="KOG1703">
    <property type="taxonomic scope" value="Eukaryota"/>
</dbReference>
<dbReference type="InParanoid" id="P49024"/>
<dbReference type="OrthoDB" id="15567at2759"/>
<dbReference type="PhylomeDB" id="P49024"/>
<dbReference type="EvolutionaryTrace" id="P49024"/>
<dbReference type="PRO" id="PR:P49024"/>
<dbReference type="Proteomes" id="UP000000539">
    <property type="component" value="Unassembled WGS sequence"/>
</dbReference>
<dbReference type="GO" id="GO:0005938">
    <property type="term" value="C:cell cortex"/>
    <property type="evidence" value="ECO:0007669"/>
    <property type="project" value="UniProtKB-SubCell"/>
</dbReference>
<dbReference type="GO" id="GO:0005925">
    <property type="term" value="C:focal adhesion"/>
    <property type="evidence" value="ECO:0000314"/>
    <property type="project" value="AgBase"/>
</dbReference>
<dbReference type="GO" id="GO:0005886">
    <property type="term" value="C:plasma membrane"/>
    <property type="evidence" value="ECO:0000250"/>
    <property type="project" value="AgBase"/>
</dbReference>
<dbReference type="GO" id="GO:0001725">
    <property type="term" value="C:stress fiber"/>
    <property type="evidence" value="ECO:0000314"/>
    <property type="project" value="AgBase"/>
</dbReference>
<dbReference type="GO" id="GO:0046872">
    <property type="term" value="F:metal ion binding"/>
    <property type="evidence" value="ECO:0007669"/>
    <property type="project" value="UniProtKB-KW"/>
</dbReference>
<dbReference type="GO" id="GO:0017166">
    <property type="term" value="F:vinculin binding"/>
    <property type="evidence" value="ECO:0000353"/>
    <property type="project" value="AgBase"/>
</dbReference>
<dbReference type="GO" id="GO:0043542">
    <property type="term" value="P:endothelial cell migration"/>
    <property type="evidence" value="ECO:0000318"/>
    <property type="project" value="GO_Central"/>
</dbReference>
<dbReference type="GO" id="GO:0035994">
    <property type="term" value="P:response to muscle stretch"/>
    <property type="evidence" value="ECO:0000314"/>
    <property type="project" value="AgBase"/>
</dbReference>
<dbReference type="GO" id="GO:0034446">
    <property type="term" value="P:substrate adhesion-dependent cell spreading"/>
    <property type="evidence" value="ECO:0000318"/>
    <property type="project" value="GO_Central"/>
</dbReference>
<dbReference type="GO" id="GO:0007179">
    <property type="term" value="P:transforming growth factor beta receptor signaling pathway"/>
    <property type="evidence" value="ECO:0000318"/>
    <property type="project" value="GO_Central"/>
</dbReference>
<dbReference type="CDD" id="cd09336">
    <property type="entry name" value="LIM1_Paxillin_like"/>
    <property type="match status" value="1"/>
</dbReference>
<dbReference type="CDD" id="cd09407">
    <property type="entry name" value="LIM2_Paxillin"/>
    <property type="match status" value="1"/>
</dbReference>
<dbReference type="CDD" id="cd09338">
    <property type="entry name" value="LIM3_Paxillin_like"/>
    <property type="match status" value="1"/>
</dbReference>
<dbReference type="CDD" id="cd09411">
    <property type="entry name" value="LIM4_Paxillin"/>
    <property type="match status" value="1"/>
</dbReference>
<dbReference type="FunFam" id="2.10.110.10:FF:000008">
    <property type="entry name" value="Paxillin isoform 1"/>
    <property type="match status" value="1"/>
</dbReference>
<dbReference type="FunFam" id="2.10.110.10:FF:000009">
    <property type="entry name" value="Paxillin isoform 1"/>
    <property type="match status" value="1"/>
</dbReference>
<dbReference type="FunFam" id="2.10.110.10:FF:000012">
    <property type="entry name" value="Paxillin isoform 1"/>
    <property type="match status" value="1"/>
</dbReference>
<dbReference type="FunFam" id="2.10.110.10:FF:000018">
    <property type="entry name" value="Paxillin isoform 1"/>
    <property type="match status" value="1"/>
</dbReference>
<dbReference type="Gene3D" id="2.10.110.10">
    <property type="entry name" value="Cysteine Rich Protein"/>
    <property type="match status" value="4"/>
</dbReference>
<dbReference type="Gene3D" id="1.20.120.330">
    <property type="entry name" value="Nucleotidyltransferases domain 2"/>
    <property type="match status" value="1"/>
</dbReference>
<dbReference type="InterPro" id="IPR047072">
    <property type="entry name" value="Paxillin_Lim_dom2"/>
</dbReference>
<dbReference type="InterPro" id="IPR001904">
    <property type="entry name" value="Paxillin_Lim_dom4"/>
</dbReference>
<dbReference type="InterPro" id="IPR047075">
    <property type="entry name" value="Paxillin_TGFB1I1_LIM_dom1"/>
</dbReference>
<dbReference type="InterPro" id="IPR001781">
    <property type="entry name" value="Znf_LIM"/>
</dbReference>
<dbReference type="PANTHER" id="PTHR24216:SF11">
    <property type="entry name" value="PAXILLIN"/>
    <property type="match status" value="1"/>
</dbReference>
<dbReference type="PANTHER" id="PTHR24216">
    <property type="entry name" value="PAXILLIN-RELATED"/>
    <property type="match status" value="1"/>
</dbReference>
<dbReference type="Pfam" id="PF00412">
    <property type="entry name" value="LIM"/>
    <property type="match status" value="4"/>
</dbReference>
<dbReference type="Pfam" id="PF03535">
    <property type="entry name" value="Paxillin"/>
    <property type="match status" value="1"/>
</dbReference>
<dbReference type="PRINTS" id="PR00832">
    <property type="entry name" value="PAXILLIN"/>
</dbReference>
<dbReference type="SMART" id="SM00132">
    <property type="entry name" value="LIM"/>
    <property type="match status" value="4"/>
</dbReference>
<dbReference type="SUPFAM" id="SSF57716">
    <property type="entry name" value="Glucocorticoid receptor-like (DNA-binding domain)"/>
    <property type="match status" value="5"/>
</dbReference>
<dbReference type="PROSITE" id="PS00478">
    <property type="entry name" value="LIM_DOMAIN_1"/>
    <property type="match status" value="4"/>
</dbReference>
<dbReference type="PROSITE" id="PS50023">
    <property type="entry name" value="LIM_DOMAIN_2"/>
    <property type="match status" value="4"/>
</dbReference>
<reference key="1">
    <citation type="journal article" date="1995" name="J. Biol. Chem.">
        <title>Molecular cloning of human paxillin, a focal adhesion protein phosphorylated by P210BCR/ABL.</title>
        <authorList>
            <person name="Salgia R."/>
            <person name="Li J.-L."/>
            <person name="Lo S.H."/>
            <person name="Brunkhorst B."/>
            <person name="Kansas G.S."/>
            <person name="Sobhany E.S."/>
            <person name="Sun Y."/>
            <person name="Pisick E."/>
            <person name="Hallek M."/>
            <person name="Ernst T."/>
            <person name="Tantravahi R."/>
            <person name="Chen L.B."/>
            <person name="Griffin J.D."/>
        </authorList>
    </citation>
    <scope>NUCLEOTIDE SEQUENCE [MRNA]</scope>
</reference>
<reference key="2">
    <citation type="journal article" date="1994" name="J. Cell Sci.">
        <title>Primary sequence of paxillin contains putative SH2 and SH3 domain binding motifs and multiple LIM domains: identification of a vinculin and pp125Fak-binding region.</title>
        <authorList>
            <person name="Turner C.E."/>
            <person name="Miller J.T."/>
        </authorList>
    </citation>
    <scope>NUCLEOTIDE SEQUENCE [MRNA]</scope>
    <scope>SUBCELLULAR LOCATION</scope>
</reference>
<reference key="3">
    <citation type="journal article" date="1995" name="J. Biol. Chem.">
        <title>Characterization of tyrosine phosphorylation of paxillin in vitro by focal adhesion kinase.</title>
        <authorList>
            <person name="Bellis S.L."/>
            <person name="Miller J.T."/>
            <person name="Turner C.E."/>
        </authorList>
    </citation>
    <scope>PHOSPHORYLATION AT TYR-118</scope>
</reference>
<reference key="4">
    <citation type="journal article" date="2005" name="J. Biol. Chem.">
        <title>Actopaxin interacts with TESK1 to regulate cell spreading on fibronectin.</title>
        <authorList>
            <person name="LaLonde D.P."/>
            <person name="Brown M.C."/>
            <person name="Bouverat B.P."/>
            <person name="Turner C.E."/>
        </authorList>
    </citation>
    <scope>INTERACTION WITH PARVA AND ILK</scope>
</reference>
<protein>
    <recommendedName>
        <fullName>Paxillin</fullName>
    </recommendedName>
</protein>
<proteinExistence type="evidence at protein level"/>
<organism>
    <name type="scientific">Gallus gallus</name>
    <name type="common">Chicken</name>
    <dbReference type="NCBI Taxonomy" id="9031"/>
    <lineage>
        <taxon>Eukaryota</taxon>
        <taxon>Metazoa</taxon>
        <taxon>Chordata</taxon>
        <taxon>Craniata</taxon>
        <taxon>Vertebrata</taxon>
        <taxon>Euteleostomi</taxon>
        <taxon>Archelosauria</taxon>
        <taxon>Archosauria</taxon>
        <taxon>Dinosauria</taxon>
        <taxon>Saurischia</taxon>
        <taxon>Theropoda</taxon>
        <taxon>Coelurosauria</taxon>
        <taxon>Aves</taxon>
        <taxon>Neognathae</taxon>
        <taxon>Galloanserae</taxon>
        <taxon>Galliformes</taxon>
        <taxon>Phasianidae</taxon>
        <taxon>Phasianinae</taxon>
        <taxon>Gallus</taxon>
    </lineage>
</organism>